<sequence length="228" mass="25515">MNLNSIFGQFSPDYFLLMPMTLASMLMAISWLFFSNSTNWLPTRIGFSFLTFNQTIIKTIFQQTNPSSITWVPIITTVFILLFSVNVLGLLPYAFTATSHISLTYSIGIPIWMSVNILGFYLSFNSRLSHLVPQGTPSFLLPLMVIIETLSLFAQPIALGLRLAANLTAGHLLIYLMSTAIWVLMNNVAIASITLIIFILLFLLEIGVACIQAYVFTALIHFYLVQNL</sequence>
<feature type="chain" id="PRO_0000082155" description="ATP synthase subunit a">
    <location>
        <begin position="1"/>
        <end position="228"/>
    </location>
</feature>
<feature type="transmembrane region" description="Helical" evidence="1">
    <location>
        <begin position="14"/>
        <end position="34"/>
    </location>
</feature>
<feature type="transmembrane region" description="Helical" evidence="1">
    <location>
        <begin position="71"/>
        <end position="91"/>
    </location>
</feature>
<feature type="transmembrane region" description="Helical" evidence="1">
    <location>
        <begin position="101"/>
        <end position="121"/>
    </location>
</feature>
<feature type="transmembrane region" description="Helical" evidence="1">
    <location>
        <begin position="139"/>
        <end position="159"/>
    </location>
</feature>
<feature type="transmembrane region" description="Helical" evidence="1">
    <location>
        <begin position="165"/>
        <end position="185"/>
    </location>
</feature>
<feature type="transmembrane region" description="Helical" evidence="1">
    <location>
        <begin position="188"/>
        <end position="208"/>
    </location>
</feature>
<protein>
    <recommendedName>
        <fullName>ATP synthase subunit a</fullName>
    </recommendedName>
    <alternativeName>
        <fullName>F-ATPase protein 6</fullName>
    </alternativeName>
</protein>
<comment type="function">
    <text>Mitochondrial membrane ATP synthase (F(1)F(0) ATP synthase or Complex V) produces ATP from ADP in the presence of a proton gradient across the membrane which is generated by electron transport complexes of the respiratory chain. F-type ATPases consist of two structural domains, F(1) - containing the extramembraneous catalytic core and F(0) - containing the membrane proton channel, linked together by a central stalk and a peripheral stalk. During catalysis, ATP synthesis in the catalytic domain of F(1) is coupled via a rotary mechanism of the central stalk subunits to proton translocation. Key component of the proton channel; it may play a direct role in the translocation of protons across the membrane.</text>
</comment>
<comment type="subunit">
    <text>F-type ATPases have 2 components, CF(1) - the catalytic core - and CF(0) - the membrane proton channel. CF(1) has five subunits: alpha(3), beta(3), gamma(1), delta(1), epsilon(1). CF(0) has three main subunits: a, b and c.</text>
</comment>
<comment type="subcellular location">
    <subcellularLocation>
        <location>Mitochondrion inner membrane</location>
        <topology>Multi-pass membrane protein</topology>
    </subcellularLocation>
</comment>
<comment type="similarity">
    <text evidence="2">Belongs to the ATPase A chain family.</text>
</comment>
<name>ATP6_PISOC</name>
<proteinExistence type="inferred from homology"/>
<accession>P25005</accession>
<gene>
    <name type="primary">ATP6</name>
</gene>
<dbReference type="EMBL" id="X55514">
    <property type="protein sequence ID" value="CAA39128.1"/>
    <property type="molecule type" value="Genomic_DNA"/>
</dbReference>
<dbReference type="PIR" id="S14209">
    <property type="entry name" value="S14209"/>
</dbReference>
<dbReference type="SMR" id="P25005"/>
<dbReference type="GO" id="GO:0005743">
    <property type="term" value="C:mitochondrial inner membrane"/>
    <property type="evidence" value="ECO:0007669"/>
    <property type="project" value="UniProtKB-SubCell"/>
</dbReference>
<dbReference type="GO" id="GO:0045259">
    <property type="term" value="C:proton-transporting ATP synthase complex"/>
    <property type="evidence" value="ECO:0007669"/>
    <property type="project" value="UniProtKB-KW"/>
</dbReference>
<dbReference type="GO" id="GO:0046933">
    <property type="term" value="F:proton-transporting ATP synthase activity, rotational mechanism"/>
    <property type="evidence" value="ECO:0007669"/>
    <property type="project" value="TreeGrafter"/>
</dbReference>
<dbReference type="CDD" id="cd00310">
    <property type="entry name" value="ATP-synt_Fo_a_6"/>
    <property type="match status" value="1"/>
</dbReference>
<dbReference type="Gene3D" id="1.20.120.220">
    <property type="entry name" value="ATP synthase, F0 complex, subunit A"/>
    <property type="match status" value="1"/>
</dbReference>
<dbReference type="InterPro" id="IPR000568">
    <property type="entry name" value="ATP_synth_F0_asu"/>
</dbReference>
<dbReference type="InterPro" id="IPR023011">
    <property type="entry name" value="ATP_synth_F0_asu_AS"/>
</dbReference>
<dbReference type="InterPro" id="IPR045083">
    <property type="entry name" value="ATP_synth_F0_asu_bact/mt"/>
</dbReference>
<dbReference type="InterPro" id="IPR035908">
    <property type="entry name" value="F0_ATP_A_sf"/>
</dbReference>
<dbReference type="NCBIfam" id="TIGR01131">
    <property type="entry name" value="ATP_synt_6_or_A"/>
    <property type="match status" value="1"/>
</dbReference>
<dbReference type="PANTHER" id="PTHR11410">
    <property type="entry name" value="ATP SYNTHASE SUBUNIT A"/>
    <property type="match status" value="1"/>
</dbReference>
<dbReference type="PANTHER" id="PTHR11410:SF0">
    <property type="entry name" value="ATP SYNTHASE SUBUNIT A"/>
    <property type="match status" value="1"/>
</dbReference>
<dbReference type="Pfam" id="PF00119">
    <property type="entry name" value="ATP-synt_A"/>
    <property type="match status" value="1"/>
</dbReference>
<dbReference type="PRINTS" id="PR00123">
    <property type="entry name" value="ATPASEA"/>
</dbReference>
<dbReference type="SUPFAM" id="SSF81336">
    <property type="entry name" value="F1F0 ATP synthase subunit A"/>
    <property type="match status" value="1"/>
</dbReference>
<dbReference type="PROSITE" id="PS00449">
    <property type="entry name" value="ATPASE_A"/>
    <property type="match status" value="1"/>
</dbReference>
<geneLocation type="mitochondrion"/>
<reference key="1">
    <citation type="journal article" date="1990" name="J. Mol. Evol.">
        <title>Nucleotide sequence of nine protein-coding genes and 22 tRNAs in the mitochondrial DNA of the sea star Pisaster ochraceus.</title>
        <authorList>
            <person name="Smith M.J."/>
            <person name="Banfield D.K."/>
            <person name="Doteval K."/>
            <person name="Gorski S."/>
            <person name="Kowbel D.J."/>
        </authorList>
    </citation>
    <scope>NUCLEOTIDE SEQUENCE [GENOMIC DNA]</scope>
</reference>
<keyword id="KW-0066">ATP synthesis</keyword>
<keyword id="KW-0138">CF(0)</keyword>
<keyword id="KW-0375">Hydrogen ion transport</keyword>
<keyword id="KW-0406">Ion transport</keyword>
<keyword id="KW-0472">Membrane</keyword>
<keyword id="KW-0496">Mitochondrion</keyword>
<keyword id="KW-0999">Mitochondrion inner membrane</keyword>
<keyword id="KW-0812">Transmembrane</keyword>
<keyword id="KW-1133">Transmembrane helix</keyword>
<keyword id="KW-0813">Transport</keyword>
<evidence type="ECO:0000255" key="1"/>
<evidence type="ECO:0000305" key="2"/>
<organism>
    <name type="scientific">Pisaster ochraceus</name>
    <name type="common">Ochre sea star</name>
    <name type="synonym">Asterias ochracea</name>
    <dbReference type="NCBI Taxonomy" id="7612"/>
    <lineage>
        <taxon>Eukaryota</taxon>
        <taxon>Metazoa</taxon>
        <taxon>Echinodermata</taxon>
        <taxon>Eleutherozoa</taxon>
        <taxon>Asterozoa</taxon>
        <taxon>Asteroidea</taxon>
        <taxon>Forcipulatacea</taxon>
        <taxon>Forcipulatida</taxon>
        <taxon>Asteriidae</taxon>
        <taxon>Pisaster</taxon>
    </lineage>
</organism>